<sequence>MDESSIIPAEKVAGAEKKELQGLLKTAVQSVDWTYSVFWQFCPQQRVLVWGNGYYNGAIKTRKTTQPAEVTAEEAALERSQQLRELYETLLAGESTSEARACTALSPEDLTETEWFYLMCVSFSFPPPSGMPGKAYARRKHVWLSGANEVDSKTFSRAILAKSAKIQTVVCIPMLDGVVELGTTKKVREDVEFVELTKSFFYDHCKTNPKPALSEHSTYEVHEEAEDEEEVEEEMTMSEEMRLGSPDDEDVSNQNLHSDLHIESTHTLDTHMDMMNLMEEGGNYSQTVTTLLMSHPTSLLSDSVSTSSYIQSSFATWRVENGKEHQQVKTAPSSQWVLKQMIFRVPFLHDNTKDKRLPREDLSHVVAERRRREKLNEKFITLRSMVPFVTKMDKVSILGDTIAYVNHLRKRVHELENTHHEQQHKRTRTCKRKTSEEVEVSIIENDVLLEMRCEYRDGLLLDILQVLHELGIETTAVHTSVNDHDFEAEIRAKVRGKKASIAEVKRAIHQVIIHDTNL</sequence>
<proteinExistence type="evidence at protein level"/>
<accession>Q9FT81</accession>
<accession>A0MF61</accession>
<accession>Q1PEA5</accession>
<accession>Q9SZ97</accession>
<evidence type="ECO:0000255" key="1"/>
<evidence type="ECO:0000255" key="2">
    <source>
        <dbReference type="PROSITE-ProRule" id="PRU00981"/>
    </source>
</evidence>
<evidence type="ECO:0000269" key="3">
    <source>
    </source>
</evidence>
<evidence type="ECO:0000269" key="4">
    <source>
    </source>
</evidence>
<evidence type="ECO:0000269" key="5">
    <source>
    </source>
</evidence>
<evidence type="ECO:0000303" key="6">
    <source>
    </source>
</evidence>
<evidence type="ECO:0000303" key="7">
    <source>
    </source>
</evidence>
<evidence type="ECO:0000303" key="8">
    <source>
    </source>
</evidence>
<evidence type="ECO:0000305" key="9"/>
<evidence type="ECO:0000312" key="10">
    <source>
        <dbReference type="Araport" id="AT4G09820"/>
    </source>
</evidence>
<evidence type="ECO:0000312" key="11">
    <source>
        <dbReference type="EMBL" id="CAB39649.1"/>
    </source>
</evidence>
<name>TT8_ARATH</name>
<comment type="function">
    <text evidence="5">Transcription activator, when associated with MYB75/PAP1 or MYB90/PAP2. Involved in the control of flavonoid pigmentation. Plays a key role in regulating leucoanthocyanidin reductase (BANYULS) and dihydroflavonol-4-reductase (DFR). Not required for leucoanthocyanidin dioxygenase (LDOX) expression.</text>
</comment>
<comment type="subunit">
    <text evidence="5 9">Homodimer (Probable). Interacts with MYB4, MYB5, MYB6, MYB82, MYB113, MYB114, MYB75/PAP1, MYB90/PAP2, and TT2.</text>
</comment>
<comment type="interaction">
    <interactant intactId="EBI-395790">
        <id>Q9FT81</id>
    </interactant>
    <interactant intactId="EBI-1546262">
        <id>Q9FNV8</id>
        <label>MYB114</label>
    </interactant>
    <organismsDiffer>false</organismsDiffer>
    <experiments>3</experiments>
</comment>
<comment type="interaction">
    <interactant intactId="EBI-395790">
        <id>Q9FT81</id>
    </interactant>
    <interactant intactId="EBI-1545177">
        <id>Q9FE25</id>
        <label>MYB75</label>
    </interactant>
    <organismsDiffer>false</organismsDiffer>
    <experiments>5</experiments>
</comment>
<comment type="interaction">
    <interactant intactId="EBI-395790">
        <id>Q9FT81</id>
    </interactant>
    <interactant intactId="EBI-1545203">
        <id>Q9ZTC3</id>
        <label>MYB90</label>
    </interactant>
    <organismsDiffer>false</organismsDiffer>
    <experiments>2</experiments>
</comment>
<comment type="interaction">
    <interactant intactId="EBI-395790">
        <id>Q9FT81</id>
    </interactant>
    <interactant intactId="EBI-1546577">
        <id>Q9C9A5</id>
        <label>MYBL2</label>
    </interactant>
    <organismsDiffer>false</organismsDiffer>
    <experiments>3</experiments>
</comment>
<comment type="interaction">
    <interactant intactId="EBI-395790">
        <id>Q9FT81</id>
    </interactant>
    <interactant intactId="EBI-395778">
        <id>Q9FJA2</id>
        <label>TT2</label>
    </interactant>
    <organismsDiffer>false</organismsDiffer>
    <experiments>5</experiments>
</comment>
<comment type="interaction">
    <interactant intactId="EBI-395790">
        <id>Q9FT81</id>
    </interactant>
    <interactant intactId="EBI-395803">
        <id>Q9XGN1</id>
        <label>TTG1</label>
    </interactant>
    <organismsDiffer>false</organismsDiffer>
    <experiments>5</experiments>
</comment>
<comment type="subcellular location">
    <subcellularLocation>
        <location evidence="2">Nucleus</location>
    </subcellularLocation>
</comment>
<comment type="tissue specificity">
    <text evidence="4">Buds, flowers and developing siliques, but not in leaves, stems and roots.</text>
</comment>
<comment type="developmental stage">
    <text>Faint expression in buds and flowers. Increases during the very early stages of seed development, reaches a maximum at the globular embryo stage and stays high throughout seed formation.</text>
</comment>
<comment type="miscellaneous">
    <text>TT8 might interact with TT2 and TTG1 to modulate the late genes of the flavonoid pathway.</text>
</comment>
<comment type="similarity">
    <text evidence="9">Belongs to the bHLH protein family.</text>
</comment>
<comment type="sequence caution" evidence="9">
    <conflict type="erroneous termination">
        <sequence resource="EMBL-CDS" id="ABK28624"/>
    </conflict>
    <text>Extended C-terminus.</text>
</comment>
<comment type="sequence caution" evidence="9">
    <conflict type="erroneous gene model prediction">
        <sequence resource="EMBL-CDS" id="CAB39649"/>
    </conflict>
</comment>
<comment type="sequence caution" evidence="9">
    <conflict type="erroneous gene model prediction">
        <sequence resource="EMBL-CDS" id="CAB78105"/>
    </conflict>
</comment>
<gene>
    <name evidence="6" type="primary">TT8</name>
    <name evidence="7" type="synonym">BHLH42</name>
    <name evidence="8" type="synonym">EN32</name>
    <name evidence="10" type="ordered locus">At4g09820</name>
    <name evidence="11" type="ORF">F17A8.170</name>
</gene>
<keyword id="KW-0010">Activator</keyword>
<keyword id="KW-0175">Coiled coil</keyword>
<keyword id="KW-0238">DNA-binding</keyword>
<keyword id="KW-0284">Flavonoid biosynthesis</keyword>
<keyword id="KW-0539">Nucleus</keyword>
<keyword id="KW-1185">Reference proteome</keyword>
<keyword id="KW-0804">Transcription</keyword>
<keyword id="KW-0805">Transcription regulation</keyword>
<reference key="1">
    <citation type="journal article" date="2000" name="Plant Cell">
        <title>The TT8 gene encodes a basic helix-loop-helix domain protein required for expression of DFR and BAN genes in Arabidopsis siliques.</title>
        <authorList>
            <person name="Nesi N."/>
            <person name="Debeaujon I."/>
            <person name="Jond C."/>
            <person name="Pelletier G."/>
            <person name="Caboche M."/>
            <person name="Lepiniec L."/>
        </authorList>
    </citation>
    <scope>NUCLEOTIDE SEQUENCE [MRNA]</scope>
    <scope>VARIANT TYR-307</scope>
    <scope>MUTANT TT8-1</scope>
    <source>
        <strain>cv. Columbia</strain>
        <strain>cv. En-2</strain>
        <strain>cv. Wassilewskija-2</strain>
        <tissue>Silique</tissue>
    </source>
</reference>
<reference key="2">
    <citation type="journal article" date="1999" name="Nature">
        <title>Sequence and analysis of chromosome 4 of the plant Arabidopsis thaliana.</title>
        <authorList>
            <person name="Mayer K.F.X."/>
            <person name="Schueller C."/>
            <person name="Wambutt R."/>
            <person name="Murphy G."/>
            <person name="Volckaert G."/>
            <person name="Pohl T."/>
            <person name="Duesterhoeft A."/>
            <person name="Stiekema W."/>
            <person name="Entian K.-D."/>
            <person name="Terryn N."/>
            <person name="Harris B."/>
            <person name="Ansorge W."/>
            <person name="Brandt P."/>
            <person name="Grivell L.A."/>
            <person name="Rieger M."/>
            <person name="Weichselgartner M."/>
            <person name="de Simone V."/>
            <person name="Obermaier B."/>
            <person name="Mache R."/>
            <person name="Mueller M."/>
            <person name="Kreis M."/>
            <person name="Delseny M."/>
            <person name="Puigdomenech P."/>
            <person name="Watson M."/>
            <person name="Schmidtheini T."/>
            <person name="Reichert B."/>
            <person name="Portetelle D."/>
            <person name="Perez-Alonso M."/>
            <person name="Boutry M."/>
            <person name="Bancroft I."/>
            <person name="Vos P."/>
            <person name="Hoheisel J."/>
            <person name="Zimmermann W."/>
            <person name="Wedler H."/>
            <person name="Ridley P."/>
            <person name="Langham S.-A."/>
            <person name="McCullagh B."/>
            <person name="Bilham L."/>
            <person name="Robben J."/>
            <person name="van der Schueren J."/>
            <person name="Grymonprez B."/>
            <person name="Chuang Y.-J."/>
            <person name="Vandenbussche F."/>
            <person name="Braeken M."/>
            <person name="Weltjens I."/>
            <person name="Voet M."/>
            <person name="Bastiaens I."/>
            <person name="Aert R."/>
            <person name="Defoor E."/>
            <person name="Weitzenegger T."/>
            <person name="Bothe G."/>
            <person name="Ramsperger U."/>
            <person name="Hilbert H."/>
            <person name="Braun M."/>
            <person name="Holzer E."/>
            <person name="Brandt A."/>
            <person name="Peters S."/>
            <person name="van Staveren M."/>
            <person name="Dirkse W."/>
            <person name="Mooijman P."/>
            <person name="Klein Lankhorst R."/>
            <person name="Rose M."/>
            <person name="Hauf J."/>
            <person name="Koetter P."/>
            <person name="Berneiser S."/>
            <person name="Hempel S."/>
            <person name="Feldpausch M."/>
            <person name="Lamberth S."/>
            <person name="Van den Daele H."/>
            <person name="De Keyser A."/>
            <person name="Buysshaert C."/>
            <person name="Gielen J."/>
            <person name="Villarroel R."/>
            <person name="De Clercq R."/>
            <person name="van Montagu M."/>
            <person name="Rogers J."/>
            <person name="Cronin A."/>
            <person name="Quail M.A."/>
            <person name="Bray-Allen S."/>
            <person name="Clark L."/>
            <person name="Doggett J."/>
            <person name="Hall S."/>
            <person name="Kay M."/>
            <person name="Lennard N."/>
            <person name="McLay K."/>
            <person name="Mayes R."/>
            <person name="Pettett A."/>
            <person name="Rajandream M.A."/>
            <person name="Lyne M."/>
            <person name="Benes V."/>
            <person name="Rechmann S."/>
            <person name="Borkova D."/>
            <person name="Bloecker H."/>
            <person name="Scharfe M."/>
            <person name="Grimm M."/>
            <person name="Loehnert T.-H."/>
            <person name="Dose S."/>
            <person name="de Haan M."/>
            <person name="Maarse A.C."/>
            <person name="Schaefer M."/>
            <person name="Mueller-Auer S."/>
            <person name="Gabel C."/>
            <person name="Fuchs M."/>
            <person name="Fartmann B."/>
            <person name="Granderath K."/>
            <person name="Dauner D."/>
            <person name="Herzl A."/>
            <person name="Neumann S."/>
            <person name="Argiriou A."/>
            <person name="Vitale D."/>
            <person name="Liguori R."/>
            <person name="Piravandi E."/>
            <person name="Massenet O."/>
            <person name="Quigley F."/>
            <person name="Clabauld G."/>
            <person name="Muendlein A."/>
            <person name="Felber R."/>
            <person name="Schnabl S."/>
            <person name="Hiller R."/>
            <person name="Schmidt W."/>
            <person name="Lecharny A."/>
            <person name="Aubourg S."/>
            <person name="Chefdor F."/>
            <person name="Cooke R."/>
            <person name="Berger C."/>
            <person name="Monfort A."/>
            <person name="Casacuberta E."/>
            <person name="Gibbons T."/>
            <person name="Weber N."/>
            <person name="Vandenbol M."/>
            <person name="Bargues M."/>
            <person name="Terol J."/>
            <person name="Torres A."/>
            <person name="Perez-Perez A."/>
            <person name="Purnelle B."/>
            <person name="Bent E."/>
            <person name="Johnson S."/>
            <person name="Tacon D."/>
            <person name="Jesse T."/>
            <person name="Heijnen L."/>
            <person name="Schwarz S."/>
            <person name="Scholler P."/>
            <person name="Heber S."/>
            <person name="Francs P."/>
            <person name="Bielke C."/>
            <person name="Frishman D."/>
            <person name="Haase D."/>
            <person name="Lemcke K."/>
            <person name="Mewes H.-W."/>
            <person name="Stocker S."/>
            <person name="Zaccaria P."/>
            <person name="Bevan M."/>
            <person name="Wilson R.K."/>
            <person name="de la Bastide M."/>
            <person name="Habermann K."/>
            <person name="Parnell L."/>
            <person name="Dedhia N."/>
            <person name="Gnoj L."/>
            <person name="Schutz K."/>
            <person name="Huang E."/>
            <person name="Spiegel L."/>
            <person name="Sekhon M."/>
            <person name="Murray J."/>
            <person name="Sheet P."/>
            <person name="Cordes M."/>
            <person name="Abu-Threideh J."/>
            <person name="Stoneking T."/>
            <person name="Kalicki J."/>
            <person name="Graves T."/>
            <person name="Harmon G."/>
            <person name="Edwards J."/>
            <person name="Latreille P."/>
            <person name="Courtney L."/>
            <person name="Cloud J."/>
            <person name="Abbott A."/>
            <person name="Scott K."/>
            <person name="Johnson D."/>
            <person name="Minx P."/>
            <person name="Bentley D."/>
            <person name="Fulton B."/>
            <person name="Miller N."/>
            <person name="Greco T."/>
            <person name="Kemp K."/>
            <person name="Kramer J."/>
            <person name="Fulton L."/>
            <person name="Mardis E."/>
            <person name="Dante M."/>
            <person name="Pepin K."/>
            <person name="Hillier L.W."/>
            <person name="Nelson J."/>
            <person name="Spieth J."/>
            <person name="Ryan E."/>
            <person name="Andrews S."/>
            <person name="Geisel C."/>
            <person name="Layman D."/>
            <person name="Du H."/>
            <person name="Ali J."/>
            <person name="Berghoff A."/>
            <person name="Jones K."/>
            <person name="Drone K."/>
            <person name="Cotton M."/>
            <person name="Joshu C."/>
            <person name="Antonoiu B."/>
            <person name="Zidanic M."/>
            <person name="Strong C."/>
            <person name="Sun H."/>
            <person name="Lamar B."/>
            <person name="Yordan C."/>
            <person name="Ma P."/>
            <person name="Zhong J."/>
            <person name="Preston R."/>
            <person name="Vil D."/>
            <person name="Shekher M."/>
            <person name="Matero A."/>
            <person name="Shah R."/>
            <person name="Swaby I.K."/>
            <person name="O'Shaughnessy A."/>
            <person name="Rodriguez M."/>
            <person name="Hoffman J."/>
            <person name="Till S."/>
            <person name="Granat S."/>
            <person name="Shohdy N."/>
            <person name="Hasegawa A."/>
            <person name="Hameed A."/>
            <person name="Lodhi M."/>
            <person name="Johnson A."/>
            <person name="Chen E."/>
            <person name="Marra M.A."/>
            <person name="Martienssen R."/>
            <person name="McCombie W.R."/>
        </authorList>
    </citation>
    <scope>NUCLEOTIDE SEQUENCE [LARGE SCALE GENOMIC DNA]</scope>
    <source>
        <strain>cv. Columbia</strain>
    </source>
</reference>
<reference key="3">
    <citation type="journal article" date="2017" name="Plant J.">
        <title>Araport11: a complete reannotation of the Arabidopsis thaliana reference genome.</title>
        <authorList>
            <person name="Cheng C.Y."/>
            <person name="Krishnakumar V."/>
            <person name="Chan A.P."/>
            <person name="Thibaud-Nissen F."/>
            <person name="Schobel S."/>
            <person name="Town C.D."/>
        </authorList>
    </citation>
    <scope>GENOME REANNOTATION</scope>
    <source>
        <strain>cv. Columbia</strain>
    </source>
</reference>
<reference key="4">
    <citation type="journal article" date="2006" name="Plant Biotechnol. J.">
        <title>Simultaneous high-throughput recombinational cloning of open reading frames in closed and open configurations.</title>
        <authorList>
            <person name="Underwood B.A."/>
            <person name="Vanderhaeghen R."/>
            <person name="Whitford R."/>
            <person name="Town C.D."/>
            <person name="Hilson P."/>
        </authorList>
    </citation>
    <scope>NUCLEOTIDE SEQUENCE [LARGE SCALE MRNA]</scope>
    <source>
        <strain>cv. Columbia</strain>
    </source>
</reference>
<reference key="5">
    <citation type="journal article" date="2003" name="Mol. Biol. Evol.">
        <title>The basic helix-loop-helix transcription factor family in plants: a genome-wide study of protein structure and functional diversity.</title>
        <authorList>
            <person name="Heim M.A."/>
            <person name="Jakoby M."/>
            <person name="Werber M."/>
            <person name="Martin C."/>
            <person name="Weisshaar B."/>
            <person name="Bailey P.C."/>
        </authorList>
    </citation>
    <scope>NUCLEOTIDE SEQUENCE [MRNA] OF 12-458</scope>
    <scope>TISSUE SPECIFICITY</scope>
    <scope>GENE FAMILY</scope>
    <scope>NOMENCLATURE</scope>
    <source>
        <strain>cv. Columbia</strain>
    </source>
</reference>
<reference key="6">
    <citation type="journal article" date="2003" name="Plant Cell">
        <title>The Arabidopsis basic/helix-loop-helix transcription factor family.</title>
        <authorList>
            <person name="Toledo-Ortiz G."/>
            <person name="Huq E."/>
            <person name="Quail P.H."/>
        </authorList>
    </citation>
    <scope>GENE FAMILY</scope>
</reference>
<reference key="7">
    <citation type="journal article" date="2004" name="Plant J.">
        <title>Comprehensive identification of Arabidopsis thaliana MYB transcription factors interacting with R/B-like BHLH proteins.</title>
        <authorList>
            <person name="Zimmermann I.M."/>
            <person name="Heim M.A."/>
            <person name="Weisshaar B."/>
            <person name="Uhrig J.F."/>
        </authorList>
    </citation>
    <scope>FUNCTION</scope>
    <scope>INTERACTION WITH MYB75; MYB90; MYB4; MYB5; MYB6; MYB82; MYB113; MYB114 AND TT2</scope>
</reference>
<organism>
    <name type="scientific">Arabidopsis thaliana</name>
    <name type="common">Mouse-ear cress</name>
    <dbReference type="NCBI Taxonomy" id="3702"/>
    <lineage>
        <taxon>Eukaryota</taxon>
        <taxon>Viridiplantae</taxon>
        <taxon>Streptophyta</taxon>
        <taxon>Embryophyta</taxon>
        <taxon>Tracheophyta</taxon>
        <taxon>Spermatophyta</taxon>
        <taxon>Magnoliopsida</taxon>
        <taxon>eudicotyledons</taxon>
        <taxon>Gunneridae</taxon>
        <taxon>Pentapetalae</taxon>
        <taxon>rosids</taxon>
        <taxon>malvids</taxon>
        <taxon>Brassicales</taxon>
        <taxon>Brassicaceae</taxon>
        <taxon>Camelineae</taxon>
        <taxon>Arabidopsis</taxon>
    </lineage>
</organism>
<feature type="chain" id="PRO_0000127431" description="Transcription factor TT8">
    <location>
        <begin position="1"/>
        <end position="518"/>
    </location>
</feature>
<feature type="domain" description="bHLH" evidence="2">
    <location>
        <begin position="359"/>
        <end position="408"/>
    </location>
</feature>
<feature type="coiled-coil region" evidence="1">
    <location>
        <begin position="220"/>
        <end position="240"/>
    </location>
</feature>
<feature type="coiled-coil region" evidence="1">
    <location>
        <begin position="405"/>
        <end position="428"/>
    </location>
</feature>
<feature type="sequence variant" description="In strain: cv. Wassilewskija-2." evidence="3">
    <original>S</original>
    <variation>Y</variation>
    <location>
        <position position="307"/>
    </location>
</feature>
<feature type="mutagenesis site" description="In tt8-1; loss of seed pigmentation." evidence="3">
    <original>L</original>
    <variation>LDIYIYPKLLIFCGFISLYLRNYHLYIYV</variation>
    <location>
        <position position="268"/>
    </location>
</feature>
<dbReference type="EMBL" id="AJ277509">
    <property type="protein sequence ID" value="CAC14865.1"/>
    <property type="molecule type" value="mRNA"/>
</dbReference>
<dbReference type="EMBL" id="AL049482">
    <property type="protein sequence ID" value="CAB39649.1"/>
    <property type="status" value="ALT_SEQ"/>
    <property type="molecule type" value="Genomic_DNA"/>
</dbReference>
<dbReference type="EMBL" id="AL161516">
    <property type="protein sequence ID" value="CAB78105.1"/>
    <property type="status" value="ALT_SEQ"/>
    <property type="molecule type" value="Genomic_DNA"/>
</dbReference>
<dbReference type="EMBL" id="CP002687">
    <property type="protein sequence ID" value="AEE82802.1"/>
    <property type="molecule type" value="Genomic_DNA"/>
</dbReference>
<dbReference type="EMBL" id="DQ446813">
    <property type="protein sequence ID" value="ABE66051.1"/>
    <property type="molecule type" value="mRNA"/>
</dbReference>
<dbReference type="EMBL" id="DQ653187">
    <property type="protein sequence ID" value="ABK28624.1"/>
    <property type="status" value="ALT_SEQ"/>
    <property type="molecule type" value="mRNA"/>
</dbReference>
<dbReference type="RefSeq" id="NP_192720.2">
    <property type="nucleotide sequence ID" value="NM_117050.3"/>
</dbReference>
<dbReference type="SMR" id="Q9FT81"/>
<dbReference type="BioGRID" id="11870">
    <property type="interactions" value="15"/>
</dbReference>
<dbReference type="FunCoup" id="Q9FT81">
    <property type="interactions" value="177"/>
</dbReference>
<dbReference type="IntAct" id="Q9FT81">
    <property type="interactions" value="13"/>
</dbReference>
<dbReference type="STRING" id="3702.Q9FT81"/>
<dbReference type="PaxDb" id="3702-AT4G09820.1"/>
<dbReference type="ProteomicsDB" id="234598"/>
<dbReference type="EnsemblPlants" id="AT4G09820.1">
    <property type="protein sequence ID" value="AT4G09820.1"/>
    <property type="gene ID" value="AT4G09820"/>
</dbReference>
<dbReference type="GeneID" id="826571"/>
<dbReference type="Gramene" id="AT4G09820.1">
    <property type="protein sequence ID" value="AT4G09820.1"/>
    <property type="gene ID" value="AT4G09820"/>
</dbReference>
<dbReference type="KEGG" id="ath:AT4G09820"/>
<dbReference type="Araport" id="AT4G09820"/>
<dbReference type="TAIR" id="AT4G09820">
    <property type="gene designation" value="TT8"/>
</dbReference>
<dbReference type="eggNOG" id="ENOG502QT7W">
    <property type="taxonomic scope" value="Eukaryota"/>
</dbReference>
<dbReference type="HOGENOM" id="CLU_023211_1_1_1"/>
<dbReference type="InParanoid" id="Q9FT81"/>
<dbReference type="OMA" id="IFMDQHG"/>
<dbReference type="PhylomeDB" id="Q9FT81"/>
<dbReference type="PRO" id="PR:Q9FT81"/>
<dbReference type="Proteomes" id="UP000006548">
    <property type="component" value="Chromosome 4"/>
</dbReference>
<dbReference type="ExpressionAtlas" id="Q9FT81">
    <property type="expression patterns" value="baseline and differential"/>
</dbReference>
<dbReference type="GO" id="GO:0005634">
    <property type="term" value="C:nucleus"/>
    <property type="evidence" value="ECO:0007669"/>
    <property type="project" value="UniProtKB-SubCell"/>
</dbReference>
<dbReference type="GO" id="GO:0003700">
    <property type="term" value="F:DNA-binding transcription factor activity"/>
    <property type="evidence" value="ECO:0000250"/>
    <property type="project" value="TAIR"/>
</dbReference>
<dbReference type="GO" id="GO:0046983">
    <property type="term" value="F:protein dimerization activity"/>
    <property type="evidence" value="ECO:0007669"/>
    <property type="project" value="InterPro"/>
</dbReference>
<dbReference type="GO" id="GO:0000976">
    <property type="term" value="F:transcription cis-regulatory region binding"/>
    <property type="evidence" value="ECO:0000314"/>
    <property type="project" value="TAIR"/>
</dbReference>
<dbReference type="GO" id="GO:0009813">
    <property type="term" value="P:flavonoid biosynthetic process"/>
    <property type="evidence" value="ECO:0007669"/>
    <property type="project" value="UniProtKB-KW"/>
</dbReference>
<dbReference type="GO" id="GO:0009867">
    <property type="term" value="P:jasmonic acid mediated signaling pathway"/>
    <property type="evidence" value="ECO:0000315"/>
    <property type="project" value="TAIR"/>
</dbReference>
<dbReference type="GO" id="GO:0031542">
    <property type="term" value="P:positive regulation of anthocyanin biosynthetic process"/>
    <property type="evidence" value="ECO:0000315"/>
    <property type="project" value="TAIR"/>
</dbReference>
<dbReference type="GO" id="GO:0009962">
    <property type="term" value="P:regulation of flavonoid biosynthetic process"/>
    <property type="evidence" value="ECO:0000304"/>
    <property type="project" value="TAIR"/>
</dbReference>
<dbReference type="GO" id="GO:2000029">
    <property type="term" value="P:regulation of proanthocyanidin biosynthetic process"/>
    <property type="evidence" value="ECO:0000270"/>
    <property type="project" value="TAIR"/>
</dbReference>
<dbReference type="GO" id="GO:0010214">
    <property type="term" value="P:seed coat development"/>
    <property type="evidence" value="ECO:0000315"/>
    <property type="project" value="TAIR"/>
</dbReference>
<dbReference type="GO" id="GO:0048316">
    <property type="term" value="P:seed development"/>
    <property type="evidence" value="ECO:0000315"/>
    <property type="project" value="TAIR"/>
</dbReference>
<dbReference type="GO" id="GO:0010026">
    <property type="term" value="P:trichome differentiation"/>
    <property type="evidence" value="ECO:0000315"/>
    <property type="project" value="TAIR"/>
</dbReference>
<dbReference type="CDD" id="cd02116">
    <property type="entry name" value="ACT"/>
    <property type="match status" value="1"/>
</dbReference>
<dbReference type="CDD" id="cd11451">
    <property type="entry name" value="bHLH_AtTT8_like"/>
    <property type="match status" value="1"/>
</dbReference>
<dbReference type="Gene3D" id="4.10.280.10">
    <property type="entry name" value="Helix-loop-helix DNA-binding domain"/>
    <property type="match status" value="1"/>
</dbReference>
<dbReference type="InterPro" id="IPR054502">
    <property type="entry name" value="bHLH-TF_ACT-like_plant"/>
</dbReference>
<dbReference type="InterPro" id="IPR011598">
    <property type="entry name" value="bHLH_dom"/>
</dbReference>
<dbReference type="InterPro" id="IPR036638">
    <property type="entry name" value="HLH_DNA-bd_sf"/>
</dbReference>
<dbReference type="InterPro" id="IPR025610">
    <property type="entry name" value="MYC/MYB_N"/>
</dbReference>
<dbReference type="PANTHER" id="PTHR46266">
    <property type="entry name" value="TRANSCRIPTION FACTOR TT8"/>
    <property type="match status" value="1"/>
</dbReference>
<dbReference type="PANTHER" id="PTHR46266:SF4">
    <property type="entry name" value="TRANSCRIPTION FACTOR TT8"/>
    <property type="match status" value="1"/>
</dbReference>
<dbReference type="Pfam" id="PF14215">
    <property type="entry name" value="bHLH-MYC_N"/>
    <property type="match status" value="1"/>
</dbReference>
<dbReference type="Pfam" id="PF22754">
    <property type="entry name" value="bHLH-TF_ACT-like_plant"/>
    <property type="match status" value="1"/>
</dbReference>
<dbReference type="Pfam" id="PF00010">
    <property type="entry name" value="HLH"/>
    <property type="match status" value="1"/>
</dbReference>
<dbReference type="SMART" id="SM00353">
    <property type="entry name" value="HLH"/>
    <property type="match status" value="1"/>
</dbReference>
<dbReference type="SUPFAM" id="SSF47459">
    <property type="entry name" value="HLH, helix-loop-helix DNA-binding domain"/>
    <property type="match status" value="1"/>
</dbReference>
<dbReference type="PROSITE" id="PS50888">
    <property type="entry name" value="BHLH"/>
    <property type="match status" value="1"/>
</dbReference>
<protein>
    <recommendedName>
        <fullName evidence="6">Transcription factor TT8</fullName>
    </recommendedName>
    <alternativeName>
        <fullName evidence="7">Basic helix-loop-helix protein 42</fullName>
        <shortName evidence="7">AtbHLH42</shortName>
        <shortName evidence="7">bHLH 42</shortName>
    </alternativeName>
    <alternativeName>
        <fullName evidence="6">Protein TRANSPARENT TESTA 8</fullName>
    </alternativeName>
    <alternativeName>
        <fullName evidence="8">Transcription factor EN 32</fullName>
    </alternativeName>
    <alternativeName>
        <fullName evidence="7">bHLH transcription factor bHLH042</fullName>
    </alternativeName>
</protein>